<gene>
    <name type="primary">rpl15e</name>
    <name type="ordered locus">MM_2616</name>
</gene>
<evidence type="ECO:0000256" key="1">
    <source>
        <dbReference type="SAM" id="MobiDB-lite"/>
    </source>
</evidence>
<evidence type="ECO:0000305" key="2"/>
<dbReference type="EMBL" id="AE008384">
    <property type="protein sequence ID" value="AAM32312.1"/>
    <property type="status" value="ALT_INIT"/>
    <property type="molecule type" value="Genomic_DNA"/>
</dbReference>
<dbReference type="RefSeq" id="WP_015412676.1">
    <property type="nucleotide sequence ID" value="NC_003901.1"/>
</dbReference>
<dbReference type="SMR" id="Q8PTU5"/>
<dbReference type="KEGG" id="mma:MM_2616"/>
<dbReference type="PATRIC" id="fig|192952.21.peg.3009"/>
<dbReference type="eggNOG" id="arCOG04209">
    <property type="taxonomic scope" value="Archaea"/>
</dbReference>
<dbReference type="HOGENOM" id="CLU_080796_1_0_2"/>
<dbReference type="Proteomes" id="UP000000595">
    <property type="component" value="Chromosome"/>
</dbReference>
<dbReference type="GO" id="GO:0022625">
    <property type="term" value="C:cytosolic large ribosomal subunit"/>
    <property type="evidence" value="ECO:0007669"/>
    <property type="project" value="TreeGrafter"/>
</dbReference>
<dbReference type="GO" id="GO:0003723">
    <property type="term" value="F:RNA binding"/>
    <property type="evidence" value="ECO:0007669"/>
    <property type="project" value="TreeGrafter"/>
</dbReference>
<dbReference type="GO" id="GO:0003735">
    <property type="term" value="F:structural constituent of ribosome"/>
    <property type="evidence" value="ECO:0007669"/>
    <property type="project" value="InterPro"/>
</dbReference>
<dbReference type="GO" id="GO:0002181">
    <property type="term" value="P:cytoplasmic translation"/>
    <property type="evidence" value="ECO:0007669"/>
    <property type="project" value="TreeGrafter"/>
</dbReference>
<dbReference type="FunFam" id="3.40.1120.10:FF:000002">
    <property type="entry name" value="50S ribosomal protein L15e"/>
    <property type="match status" value="1"/>
</dbReference>
<dbReference type="Gene3D" id="3.40.1120.10">
    <property type="entry name" value="Ribosomal protein l15e"/>
    <property type="match status" value="1"/>
</dbReference>
<dbReference type="HAMAP" id="MF_00256">
    <property type="entry name" value="Ribosomal_eL15"/>
    <property type="match status" value="1"/>
</dbReference>
<dbReference type="InterPro" id="IPR024794">
    <property type="entry name" value="Rbsml_eL15_core_dom_sf"/>
</dbReference>
<dbReference type="InterPro" id="IPR000439">
    <property type="entry name" value="Ribosomal_eL15"/>
</dbReference>
<dbReference type="InterPro" id="IPR020926">
    <property type="entry name" value="Ribosomal_eL15_arc"/>
</dbReference>
<dbReference type="InterPro" id="IPR020925">
    <property type="entry name" value="Ribosomal_eL15_CS"/>
</dbReference>
<dbReference type="InterPro" id="IPR012678">
    <property type="entry name" value="Ribosomal_uL23/eL15/eS24_sf"/>
</dbReference>
<dbReference type="NCBIfam" id="NF003269">
    <property type="entry name" value="PRK04243.1"/>
    <property type="match status" value="1"/>
</dbReference>
<dbReference type="PANTHER" id="PTHR11847:SF4">
    <property type="entry name" value="LARGE RIBOSOMAL SUBUNIT PROTEIN EL15"/>
    <property type="match status" value="1"/>
</dbReference>
<dbReference type="PANTHER" id="PTHR11847">
    <property type="entry name" value="RIBOSOMAL PROTEIN L15"/>
    <property type="match status" value="1"/>
</dbReference>
<dbReference type="Pfam" id="PF00827">
    <property type="entry name" value="Ribosomal_L15e"/>
    <property type="match status" value="1"/>
</dbReference>
<dbReference type="SMART" id="SM01384">
    <property type="entry name" value="Ribosomal_L15e"/>
    <property type="match status" value="1"/>
</dbReference>
<dbReference type="SUPFAM" id="SSF54189">
    <property type="entry name" value="Ribosomal proteins S24e, L23 and L15e"/>
    <property type="match status" value="1"/>
</dbReference>
<dbReference type="PROSITE" id="PS01194">
    <property type="entry name" value="RIBOSOMAL_L15E"/>
    <property type="match status" value="1"/>
</dbReference>
<reference key="1">
    <citation type="journal article" date="2002" name="J. Mol. Microbiol. Biotechnol.">
        <title>The genome of Methanosarcina mazei: evidence for lateral gene transfer between Bacteria and Archaea.</title>
        <authorList>
            <person name="Deppenmeier U."/>
            <person name="Johann A."/>
            <person name="Hartsch T."/>
            <person name="Merkl R."/>
            <person name="Schmitz R.A."/>
            <person name="Martinez-Arias R."/>
            <person name="Henne A."/>
            <person name="Wiezer A."/>
            <person name="Baeumer S."/>
            <person name="Jacobi C."/>
            <person name="Brueggemann H."/>
            <person name="Lienard T."/>
            <person name="Christmann A."/>
            <person name="Boemecke M."/>
            <person name="Steckel S."/>
            <person name="Bhattacharyya A."/>
            <person name="Lykidis A."/>
            <person name="Overbeek R."/>
            <person name="Klenk H.-P."/>
            <person name="Gunsalus R.P."/>
            <person name="Fritz H.-J."/>
            <person name="Gottschalk G."/>
        </authorList>
    </citation>
    <scope>NUCLEOTIDE SEQUENCE [LARGE SCALE GENOMIC DNA]</scope>
    <source>
        <strain>ATCC BAA-159 / DSM 3647 / Goe1 / Go1 / JCM 11833 / OCM 88</strain>
    </source>
</reference>
<proteinExistence type="inferred from homology"/>
<comment type="similarity">
    <text evidence="2">Belongs to the eukaryotic ribosomal protein eL15 family.</text>
</comment>
<comment type="sequence caution" evidence="2">
    <conflict type="erroneous initiation">
        <sequence resource="EMBL-CDS" id="AAM32312"/>
    </conflict>
</comment>
<sequence length="196" mass="22547">MVKSFYGYVRDAWKNPDETYVNELRWERLQVWRKQGSVTRIERPTRIDRARSLGYKAKQGIVVVRVNVRRGGLGHVRPNRGRRTQKMGKNKVSGGMSIQRIAEARADRKYPNLEVLNSYWVGEDGKHKWFEVILVDPHHPVIKSDKNLNWICDASIRGRATRGKTSAGRKGRGMSTRGKGTEKTRPSIRAHKSRGK</sequence>
<keyword id="KW-0687">Ribonucleoprotein</keyword>
<keyword id="KW-0689">Ribosomal protein</keyword>
<protein>
    <recommendedName>
        <fullName evidence="2">Large ribosomal subunit protein eL15</fullName>
    </recommendedName>
    <alternativeName>
        <fullName>50S ribosomal protein L15e</fullName>
    </alternativeName>
</protein>
<accession>Q8PTU5</accession>
<name>RL15E_METMA</name>
<organism>
    <name type="scientific">Methanosarcina mazei (strain ATCC BAA-159 / DSM 3647 / Goe1 / Go1 / JCM 11833 / OCM 88)</name>
    <name type="common">Methanosarcina frisia</name>
    <dbReference type="NCBI Taxonomy" id="192952"/>
    <lineage>
        <taxon>Archaea</taxon>
        <taxon>Methanobacteriati</taxon>
        <taxon>Methanobacteriota</taxon>
        <taxon>Stenosarchaea group</taxon>
        <taxon>Methanomicrobia</taxon>
        <taxon>Methanosarcinales</taxon>
        <taxon>Methanosarcinaceae</taxon>
        <taxon>Methanosarcina</taxon>
    </lineage>
</organism>
<feature type="chain" id="PRO_0000127575" description="Large ribosomal subunit protein eL15">
    <location>
        <begin position="1"/>
        <end position="196"/>
    </location>
</feature>
<feature type="region of interest" description="Disordered" evidence="1">
    <location>
        <begin position="160"/>
        <end position="196"/>
    </location>
</feature>
<feature type="compositionally biased region" description="Basic residues" evidence="1">
    <location>
        <begin position="160"/>
        <end position="172"/>
    </location>
</feature>
<feature type="compositionally biased region" description="Basic residues" evidence="1">
    <location>
        <begin position="186"/>
        <end position="196"/>
    </location>
</feature>